<gene>
    <name type="primary">POD3</name>
</gene>
<gene>
    <name type="primary">POD4</name>
</gene>
<reference key="1">
    <citation type="journal article" date="2005" name="Plant Physiol.">
        <title>Cloning and molecular characterization of the basic peroxidase isoenzyme from Zinnia elegans, an enzyme involved in lignin biosynthesis.</title>
        <authorList>
            <person name="Gabaldon C."/>
            <person name="Lopez-Serrano M."/>
            <person name="Pedreno M.A."/>
            <person name="Barcelo A.R."/>
        </authorList>
    </citation>
    <scope>NUCLEOTIDE SEQUENCE [MRNA]</scope>
    <scope>PROTEIN SEQUENCE OF 31-43; 133-146; 186-201 AND 297-313</scope>
    <scope>TISSUE SPECIFICITY</scope>
    <scope>CATALYTIC ACTIVITY</scope>
    <scope>BIOPHYSICOCHEMICAL PROPERTIES</scope>
    <scope>PYROGLUTAMATE FORMATION AT GLN-31</scope>
    <scope>MASS SPECTROMETRY</scope>
    <source>
        <strain>cv. Envy</strain>
        <tissue>Callus</tissue>
    </source>
</reference>
<feature type="signal peptide" evidence="3">
    <location>
        <begin position="1"/>
        <end position="30"/>
    </location>
</feature>
<feature type="chain" id="PRO_0000042697" description="Basic peroxidase">
    <location>
        <begin position="31"/>
        <end position="321"/>
    </location>
</feature>
<feature type="active site" description="Proton acceptor">
    <location>
        <position position="72"/>
    </location>
</feature>
<feature type="binding site" evidence="2">
    <location>
        <position position="73"/>
    </location>
    <ligand>
        <name>Ca(2+)</name>
        <dbReference type="ChEBI" id="CHEBI:29108"/>
        <label>1</label>
    </ligand>
</feature>
<feature type="binding site" evidence="2">
    <location>
        <position position="76"/>
    </location>
    <ligand>
        <name>Ca(2+)</name>
        <dbReference type="ChEBI" id="CHEBI:29108"/>
        <label>1</label>
    </ligand>
</feature>
<feature type="binding site" evidence="2">
    <location>
        <position position="78"/>
    </location>
    <ligand>
        <name>Ca(2+)</name>
        <dbReference type="ChEBI" id="CHEBI:29108"/>
        <label>1</label>
    </ligand>
</feature>
<feature type="binding site" evidence="2">
    <location>
        <position position="80"/>
    </location>
    <ligand>
        <name>Ca(2+)</name>
        <dbReference type="ChEBI" id="CHEBI:29108"/>
        <label>1</label>
    </ligand>
</feature>
<feature type="binding site" evidence="2">
    <location>
        <position position="82"/>
    </location>
    <ligand>
        <name>Ca(2+)</name>
        <dbReference type="ChEBI" id="CHEBI:29108"/>
        <label>1</label>
    </ligand>
</feature>
<feature type="binding site" evidence="2">
    <location>
        <position position="165"/>
    </location>
    <ligand>
        <name>substrate</name>
    </ligand>
</feature>
<feature type="binding site" description="axial binding residue">
    <location>
        <position position="195"/>
    </location>
    <ligand>
        <name>heme b</name>
        <dbReference type="ChEBI" id="CHEBI:60344"/>
    </ligand>
    <ligandPart>
        <name>Fe</name>
        <dbReference type="ChEBI" id="CHEBI:18248"/>
    </ligandPart>
</feature>
<feature type="binding site" evidence="2">
    <location>
        <position position="196"/>
    </location>
    <ligand>
        <name>Ca(2+)</name>
        <dbReference type="ChEBI" id="CHEBI:29108"/>
        <label>2</label>
    </ligand>
</feature>
<feature type="binding site" evidence="2">
    <location>
        <position position="241"/>
    </location>
    <ligand>
        <name>Ca(2+)</name>
        <dbReference type="ChEBI" id="CHEBI:29108"/>
        <label>2</label>
    </ligand>
</feature>
<feature type="binding site" evidence="2">
    <location>
        <position position="244"/>
    </location>
    <ligand>
        <name>Ca(2+)</name>
        <dbReference type="ChEBI" id="CHEBI:29108"/>
        <label>2</label>
    </ligand>
</feature>
<feature type="binding site" evidence="2">
    <location>
        <position position="249"/>
    </location>
    <ligand>
        <name>Ca(2+)</name>
        <dbReference type="ChEBI" id="CHEBI:29108"/>
        <label>2</label>
    </ligand>
</feature>
<feature type="site" description="Transition state stabilizer" evidence="2">
    <location>
        <position position="68"/>
    </location>
</feature>
<feature type="modified residue" description="Pyrrolidone carboxylic acid" evidence="2 3">
    <location>
        <position position="31"/>
    </location>
</feature>
<feature type="glycosylation site" description="N-linked (GlcNAc...) asparagine" evidence="1">
    <location>
        <position position="211"/>
    </location>
</feature>
<feature type="glycosylation site" description="N-linked (GlcNAc...) asparagine" evidence="1">
    <location>
        <position position="221"/>
    </location>
</feature>
<feature type="disulfide bond" evidence="2">
    <location>
        <begin position="41"/>
        <end position="117"/>
    </location>
</feature>
<feature type="disulfide bond" evidence="2">
    <location>
        <begin position="74"/>
        <end position="79"/>
    </location>
</feature>
<feature type="disulfide bond" evidence="2">
    <location>
        <begin position="123"/>
        <end position="317"/>
    </location>
</feature>
<feature type="disulfide bond" evidence="2">
    <location>
        <begin position="202"/>
        <end position="228"/>
    </location>
</feature>
<organism>
    <name type="scientific">Zinnia elegans</name>
    <name type="common">Garden zinnia</name>
    <name type="synonym">Zinnia violacea</name>
    <dbReference type="NCBI Taxonomy" id="34245"/>
    <lineage>
        <taxon>Eukaryota</taxon>
        <taxon>Viridiplantae</taxon>
        <taxon>Streptophyta</taxon>
        <taxon>Embryophyta</taxon>
        <taxon>Tracheophyta</taxon>
        <taxon>Spermatophyta</taxon>
        <taxon>Magnoliopsida</taxon>
        <taxon>eudicotyledons</taxon>
        <taxon>Gunneridae</taxon>
        <taxon>Pentapetalae</taxon>
        <taxon>asterids</taxon>
        <taxon>campanulids</taxon>
        <taxon>Asterales</taxon>
        <taxon>Asteraceae</taxon>
        <taxon>Asteroideae</taxon>
        <taxon>Heliantheae alliance</taxon>
        <taxon>Heliantheae</taxon>
        <taxon>Zinnia</taxon>
    </lineage>
</organism>
<proteinExistence type="evidence at protein level"/>
<accession>Q4W1I9</accession>
<accession>P84332</accession>
<accession>P84333</accession>
<sequence>MSYHKSSGTTLMVPLFMLLISVNYFMSCNAQLSTTFYDTTCPTALSTIRTSIRSSVSSNRRNAALVIRLLFHDCFVQGCDASLLLSGAGSERASPANDGVLGYEVIDAAKAAVERVCPGVVSCADILAVAARDASVAVGGPSWTVRLGRRDSTTSNAAQAATDLPRGNMVLSQLISNFANKGLNTREMVALSGSHTLGQARCIRFRGRIYNSTLRIEPNFNRSLSQACPPTGNDATLRPLDLVTPNSFDNNYYRNLVTSRGLLISDQVLFNADSTDSIVTEYVNNPATFAADFAAAMVKMSEIGVVTGTSGIVRTLCGNPS</sequence>
<protein>
    <recommendedName>
        <fullName>Basic peroxidase</fullName>
        <ecNumber>1.11.1.7</ecNumber>
    </recommendedName>
    <alternativeName>
        <fullName>ZePrx33.44</fullName>
    </alternativeName>
    <alternativeName>
        <fullName>ZePrx34.70</fullName>
    </alternativeName>
</protein>
<dbReference type="EC" id="1.11.1.7"/>
<dbReference type="EMBL" id="AJ880394">
    <property type="protein sequence ID" value="CAI54301.1"/>
    <property type="molecule type" value="mRNA"/>
</dbReference>
<dbReference type="EMBL" id="AJ880392">
    <property type="protein sequence ID" value="CAI54299.1"/>
    <property type="molecule type" value="mRNA"/>
</dbReference>
<dbReference type="SMR" id="Q4W1I9"/>
<dbReference type="PeroxiBase" id="2625">
    <property type="entry name" value="ZePrx14"/>
</dbReference>
<dbReference type="GlyCosmos" id="Q4W1I9">
    <property type="glycosylation" value="2 sites, No reported glycans"/>
</dbReference>
<dbReference type="GO" id="GO:0005576">
    <property type="term" value="C:extracellular region"/>
    <property type="evidence" value="ECO:0007669"/>
    <property type="project" value="UniProtKB-SubCell"/>
</dbReference>
<dbReference type="GO" id="GO:0020037">
    <property type="term" value="F:heme binding"/>
    <property type="evidence" value="ECO:0007669"/>
    <property type="project" value="InterPro"/>
</dbReference>
<dbReference type="GO" id="GO:0140825">
    <property type="term" value="F:lactoperoxidase activity"/>
    <property type="evidence" value="ECO:0007669"/>
    <property type="project" value="UniProtKB-EC"/>
</dbReference>
<dbReference type="GO" id="GO:0046872">
    <property type="term" value="F:metal ion binding"/>
    <property type="evidence" value="ECO:0007669"/>
    <property type="project" value="UniProtKB-KW"/>
</dbReference>
<dbReference type="GO" id="GO:0042744">
    <property type="term" value="P:hydrogen peroxide catabolic process"/>
    <property type="evidence" value="ECO:0007669"/>
    <property type="project" value="UniProtKB-KW"/>
</dbReference>
<dbReference type="GO" id="GO:0006979">
    <property type="term" value="P:response to oxidative stress"/>
    <property type="evidence" value="ECO:0007669"/>
    <property type="project" value="InterPro"/>
</dbReference>
<dbReference type="CDD" id="cd00693">
    <property type="entry name" value="secretory_peroxidase"/>
    <property type="match status" value="1"/>
</dbReference>
<dbReference type="FunFam" id="1.10.420.10:FF:000001">
    <property type="entry name" value="Peroxidase"/>
    <property type="match status" value="1"/>
</dbReference>
<dbReference type="FunFam" id="1.10.520.10:FF:000009">
    <property type="entry name" value="Peroxidase"/>
    <property type="match status" value="1"/>
</dbReference>
<dbReference type="Gene3D" id="1.10.520.10">
    <property type="match status" value="1"/>
</dbReference>
<dbReference type="Gene3D" id="1.10.420.10">
    <property type="entry name" value="Peroxidase, domain 2"/>
    <property type="match status" value="1"/>
</dbReference>
<dbReference type="InterPro" id="IPR002016">
    <property type="entry name" value="Haem_peroxidase"/>
</dbReference>
<dbReference type="InterPro" id="IPR010255">
    <property type="entry name" value="Haem_peroxidase_sf"/>
</dbReference>
<dbReference type="InterPro" id="IPR000823">
    <property type="entry name" value="Peroxidase_pln"/>
</dbReference>
<dbReference type="InterPro" id="IPR019794">
    <property type="entry name" value="Peroxidases_AS"/>
</dbReference>
<dbReference type="InterPro" id="IPR019793">
    <property type="entry name" value="Peroxidases_heam-ligand_BS"/>
</dbReference>
<dbReference type="InterPro" id="IPR033905">
    <property type="entry name" value="Secretory_peroxidase"/>
</dbReference>
<dbReference type="PANTHER" id="PTHR31388:SF215">
    <property type="entry name" value="PEROXIDASE"/>
    <property type="match status" value="1"/>
</dbReference>
<dbReference type="PANTHER" id="PTHR31388">
    <property type="entry name" value="PEROXIDASE 72-RELATED"/>
    <property type="match status" value="1"/>
</dbReference>
<dbReference type="Pfam" id="PF00141">
    <property type="entry name" value="peroxidase"/>
    <property type="match status" value="1"/>
</dbReference>
<dbReference type="PRINTS" id="PR00458">
    <property type="entry name" value="PEROXIDASE"/>
</dbReference>
<dbReference type="PRINTS" id="PR00461">
    <property type="entry name" value="PLPEROXIDASE"/>
</dbReference>
<dbReference type="SUPFAM" id="SSF48113">
    <property type="entry name" value="Heme-dependent peroxidases"/>
    <property type="match status" value="1"/>
</dbReference>
<dbReference type="PROSITE" id="PS00435">
    <property type="entry name" value="PEROXIDASE_1"/>
    <property type="match status" value="1"/>
</dbReference>
<dbReference type="PROSITE" id="PS00436">
    <property type="entry name" value="PEROXIDASE_2"/>
    <property type="match status" value="1"/>
</dbReference>
<dbReference type="PROSITE" id="PS50873">
    <property type="entry name" value="PEROXIDASE_4"/>
    <property type="match status" value="1"/>
</dbReference>
<keyword id="KW-0106">Calcium</keyword>
<keyword id="KW-0903">Direct protein sequencing</keyword>
<keyword id="KW-1015">Disulfide bond</keyword>
<keyword id="KW-0325">Glycoprotein</keyword>
<keyword id="KW-0349">Heme</keyword>
<keyword id="KW-0376">Hydrogen peroxide</keyword>
<keyword id="KW-0408">Iron</keyword>
<keyword id="KW-0479">Metal-binding</keyword>
<keyword id="KW-0560">Oxidoreductase</keyword>
<keyword id="KW-0575">Peroxidase</keyword>
<keyword id="KW-0873">Pyrrolidone carboxylic acid</keyword>
<keyword id="KW-0964">Secreted</keyword>
<keyword id="KW-0732">Signal</keyword>
<comment type="function">
    <text>Removal of H(2)O(2), oxidation of toxic reductants, biosynthesis and degradation of lignin, suberization, auxin catabolism, response to environmental stresses such as wounding, pathogen attack and oxidative stress. These functions might be dependent on each isozyme/isoform in each plant tissue. Involved in the synthesis of highly polymerized lignins.</text>
</comment>
<comment type="catalytic activity">
    <reaction evidence="3">
        <text>2 a phenolic donor + H2O2 = 2 a phenolic radical donor + 2 H2O</text>
        <dbReference type="Rhea" id="RHEA:56136"/>
        <dbReference type="ChEBI" id="CHEBI:15377"/>
        <dbReference type="ChEBI" id="CHEBI:16240"/>
        <dbReference type="ChEBI" id="CHEBI:139520"/>
        <dbReference type="ChEBI" id="CHEBI:139521"/>
        <dbReference type="EC" id="1.11.1.7"/>
    </reaction>
</comment>
<comment type="cofactor">
    <cofactor evidence="2">
        <name>heme b</name>
        <dbReference type="ChEBI" id="CHEBI:60344"/>
    </cofactor>
    <text evidence="2">Binds 1 heme b (iron(II)-protoporphyrin IX) group per subunit.</text>
</comment>
<comment type="cofactor">
    <cofactor evidence="2">
        <name>Ca(2+)</name>
        <dbReference type="ChEBI" id="CHEBI:29108"/>
    </cofactor>
    <text evidence="2">Binds 2 calcium ions per subunit.</text>
</comment>
<comment type="biophysicochemical properties">
    <kinetics>
        <KM evidence="3">241 uM for p-coumaryl alcohol (in the presence of 10.2 uM H2O2, for a partially glycosylated enzyme)</KM>
        <KM evidence="3">432 uM for p-coumaryl alcohol (in the presence of 10.2 uM H2O2, for a fully glycosylated enzyme)</KM>
        <KM evidence="3">83 uM for coniferyl alcohol (in the presence of 10.2 uM H2O2, for a partially glycosylated enzyme)</KM>
        <KM evidence="3">124 uM for coniferyl alcohol (in the presence of 10.2 uM H2O2, for a fully glycosylated enzyme)</KM>
        <KM evidence="3">15 uM for sinapyl alcohol (in the presence of 10.2 uM H2O2, for a partially glycosylated enzyme)</KM>
        <KM evidence="3">13 uM for sinapyl alcohol (in the presence of 10.2 uM H2O2, for a fully glycosylated enzyme)</KM>
        <text>The full glycosylation reduces the affinity of the enzyme for both p-coumaryl and coniferyl, but not sinapyl, alcohol.</text>
    </kinetics>
</comment>
<comment type="subcellular location">
    <subcellularLocation>
        <location evidence="2">Secreted</location>
    </subcellularLocation>
</comment>
<comment type="tissue specificity">
    <text evidence="3">Expressed in tracheary elements, roots, young and old hypocotyls, and stems in the partially glycosylated form and in roots and young hypocotyls in the fully glycosylated form. None of the isoforms is significantly expressed in leaves or cotyledons.</text>
</comment>
<comment type="PTM">
    <text>N-glycosylated.</text>
</comment>
<comment type="mass spectrometry">
    <text>Deglycosylated form.</text>
</comment>
<comment type="mass spectrometry">
    <text>Partially glycosylated form.</text>
</comment>
<comment type="mass spectrometry">
    <text>Fully glycosylated form.</text>
</comment>
<comment type="similarity">
    <text evidence="2">Belongs to the peroxidase family. Classical plant (class III) peroxidase subfamily.</text>
</comment>
<comment type="caution">
    <text evidence="4">Four genes are encoding the same mature protein that may have different glycosylation degree. The two precursors produced differ by only one amino acid located in the signal peptide.</text>
</comment>
<evidence type="ECO:0000255" key="1"/>
<evidence type="ECO:0000255" key="2">
    <source>
        <dbReference type="PROSITE-ProRule" id="PRU00297"/>
    </source>
</evidence>
<evidence type="ECO:0000269" key="3">
    <source>
    </source>
</evidence>
<evidence type="ECO:0000305" key="4"/>
<name>PER2_ZINEL</name>